<evidence type="ECO:0000255" key="1">
    <source>
        <dbReference type="HAMAP-Rule" id="MF_01398"/>
    </source>
</evidence>
<dbReference type="EMBL" id="CP000422">
    <property type="protein sequence ID" value="ABJ68362.1"/>
    <property type="molecule type" value="Genomic_DNA"/>
</dbReference>
<dbReference type="RefSeq" id="WP_002833683.1">
    <property type="nucleotide sequence ID" value="NC_008525.1"/>
</dbReference>
<dbReference type="SMR" id="Q03EL0"/>
<dbReference type="STRING" id="278197.PEPE_1321"/>
<dbReference type="DNASU" id="4417008"/>
<dbReference type="GeneID" id="33061454"/>
<dbReference type="KEGG" id="ppe:PEPE_1321"/>
<dbReference type="eggNOG" id="COG0711">
    <property type="taxonomic scope" value="Bacteria"/>
</dbReference>
<dbReference type="HOGENOM" id="CLU_079215_4_2_9"/>
<dbReference type="OrthoDB" id="282095at2"/>
<dbReference type="Proteomes" id="UP000000773">
    <property type="component" value="Chromosome"/>
</dbReference>
<dbReference type="GO" id="GO:0005886">
    <property type="term" value="C:plasma membrane"/>
    <property type="evidence" value="ECO:0007669"/>
    <property type="project" value="UniProtKB-SubCell"/>
</dbReference>
<dbReference type="GO" id="GO:0045259">
    <property type="term" value="C:proton-transporting ATP synthase complex"/>
    <property type="evidence" value="ECO:0007669"/>
    <property type="project" value="UniProtKB-KW"/>
</dbReference>
<dbReference type="GO" id="GO:0046933">
    <property type="term" value="F:proton-transporting ATP synthase activity, rotational mechanism"/>
    <property type="evidence" value="ECO:0007669"/>
    <property type="project" value="UniProtKB-UniRule"/>
</dbReference>
<dbReference type="GO" id="GO:0046961">
    <property type="term" value="F:proton-transporting ATPase activity, rotational mechanism"/>
    <property type="evidence" value="ECO:0007669"/>
    <property type="project" value="TreeGrafter"/>
</dbReference>
<dbReference type="CDD" id="cd06503">
    <property type="entry name" value="ATP-synt_Fo_b"/>
    <property type="match status" value="1"/>
</dbReference>
<dbReference type="HAMAP" id="MF_01398">
    <property type="entry name" value="ATP_synth_b_bprime"/>
    <property type="match status" value="1"/>
</dbReference>
<dbReference type="InterPro" id="IPR028987">
    <property type="entry name" value="ATP_synth_B-like_membr_sf"/>
</dbReference>
<dbReference type="InterPro" id="IPR002146">
    <property type="entry name" value="ATP_synth_b/b'su_bac/chlpt"/>
</dbReference>
<dbReference type="InterPro" id="IPR005864">
    <property type="entry name" value="ATP_synth_F0_bsu_bac"/>
</dbReference>
<dbReference type="InterPro" id="IPR050059">
    <property type="entry name" value="ATP_synthase_B_chain"/>
</dbReference>
<dbReference type="NCBIfam" id="TIGR01144">
    <property type="entry name" value="ATP_synt_b"/>
    <property type="match status" value="1"/>
</dbReference>
<dbReference type="PANTHER" id="PTHR33445:SF1">
    <property type="entry name" value="ATP SYNTHASE SUBUNIT B"/>
    <property type="match status" value="1"/>
</dbReference>
<dbReference type="PANTHER" id="PTHR33445">
    <property type="entry name" value="ATP SYNTHASE SUBUNIT B', CHLOROPLASTIC"/>
    <property type="match status" value="1"/>
</dbReference>
<dbReference type="Pfam" id="PF00430">
    <property type="entry name" value="ATP-synt_B"/>
    <property type="match status" value="1"/>
</dbReference>
<dbReference type="SUPFAM" id="SSF81573">
    <property type="entry name" value="F1F0 ATP synthase subunit B, membrane domain"/>
    <property type="match status" value="1"/>
</dbReference>
<reference key="1">
    <citation type="journal article" date="2006" name="Proc. Natl. Acad. Sci. U.S.A.">
        <title>Comparative genomics of the lactic acid bacteria.</title>
        <authorList>
            <person name="Makarova K.S."/>
            <person name="Slesarev A."/>
            <person name="Wolf Y.I."/>
            <person name="Sorokin A."/>
            <person name="Mirkin B."/>
            <person name="Koonin E.V."/>
            <person name="Pavlov A."/>
            <person name="Pavlova N."/>
            <person name="Karamychev V."/>
            <person name="Polouchine N."/>
            <person name="Shakhova V."/>
            <person name="Grigoriev I."/>
            <person name="Lou Y."/>
            <person name="Rohksar D."/>
            <person name="Lucas S."/>
            <person name="Huang K."/>
            <person name="Goodstein D.M."/>
            <person name="Hawkins T."/>
            <person name="Plengvidhya V."/>
            <person name="Welker D."/>
            <person name="Hughes J."/>
            <person name="Goh Y."/>
            <person name="Benson A."/>
            <person name="Baldwin K."/>
            <person name="Lee J.-H."/>
            <person name="Diaz-Muniz I."/>
            <person name="Dosti B."/>
            <person name="Smeianov V."/>
            <person name="Wechter W."/>
            <person name="Barabote R."/>
            <person name="Lorca G."/>
            <person name="Altermann E."/>
            <person name="Barrangou R."/>
            <person name="Ganesan B."/>
            <person name="Xie Y."/>
            <person name="Rawsthorne H."/>
            <person name="Tamir D."/>
            <person name="Parker C."/>
            <person name="Breidt F."/>
            <person name="Broadbent J.R."/>
            <person name="Hutkins R."/>
            <person name="O'Sullivan D."/>
            <person name="Steele J."/>
            <person name="Unlu G."/>
            <person name="Saier M.H. Jr."/>
            <person name="Klaenhammer T."/>
            <person name="Richardson P."/>
            <person name="Kozyavkin S."/>
            <person name="Weimer B.C."/>
            <person name="Mills D.A."/>
        </authorList>
    </citation>
    <scope>NUCLEOTIDE SEQUENCE [LARGE SCALE GENOMIC DNA]</scope>
    <source>
        <strain>ATCC 25745 / CCUG 21536 / LMG 10740 / 183-1w</strain>
    </source>
</reference>
<sequence>MFSHIIVGAAHGSTLYVGDMLFYAILFIVLMALIAKFAWGPVNAMLKERADRISNDIDSAEQSRIEAEKLAKQRKEALDNSHAEATSIINNAKDSGAKERELIIGNAQNEAKSLKDKAKQDIEQERADALKSAQDDIASLSIEIASKVIKKELDENSQKDLIDSYIEGLGDSK</sequence>
<accession>Q03EL0</accession>
<name>ATPF_PEDPA</name>
<comment type="function">
    <text evidence="1">F(1)F(0) ATP synthase produces ATP from ADP in the presence of a proton or sodium gradient. F-type ATPases consist of two structural domains, F(1) containing the extramembraneous catalytic core and F(0) containing the membrane proton channel, linked together by a central stalk and a peripheral stalk. During catalysis, ATP synthesis in the catalytic domain of F(1) is coupled via a rotary mechanism of the central stalk subunits to proton translocation.</text>
</comment>
<comment type="function">
    <text evidence="1">Component of the F(0) channel, it forms part of the peripheral stalk, linking F(1) to F(0).</text>
</comment>
<comment type="subunit">
    <text evidence="1">F-type ATPases have 2 components, F(1) - the catalytic core - and F(0) - the membrane proton channel. F(1) has five subunits: alpha(3), beta(3), gamma(1), delta(1), epsilon(1). F(0) has three main subunits: a(1), b(2) and c(10-14). The alpha and beta chains form an alternating ring which encloses part of the gamma chain. F(1) is attached to F(0) by a central stalk formed by the gamma and epsilon chains, while a peripheral stalk is formed by the delta and b chains.</text>
</comment>
<comment type="subcellular location">
    <subcellularLocation>
        <location evidence="1">Cell membrane</location>
        <topology evidence="1">Single-pass membrane protein</topology>
    </subcellularLocation>
</comment>
<comment type="similarity">
    <text evidence="1">Belongs to the ATPase B chain family.</text>
</comment>
<gene>
    <name evidence="1" type="primary">atpF</name>
    <name type="ordered locus">PEPE_1321</name>
</gene>
<feature type="chain" id="PRO_0000368646" description="ATP synthase subunit b">
    <location>
        <begin position="1"/>
        <end position="173"/>
    </location>
</feature>
<feature type="transmembrane region" description="Helical" evidence="1">
    <location>
        <begin position="15"/>
        <end position="35"/>
    </location>
</feature>
<organism>
    <name type="scientific">Pediococcus pentosaceus (strain ATCC 25745 / CCUG 21536 / LMG 10740 / 183-1w)</name>
    <dbReference type="NCBI Taxonomy" id="278197"/>
    <lineage>
        <taxon>Bacteria</taxon>
        <taxon>Bacillati</taxon>
        <taxon>Bacillota</taxon>
        <taxon>Bacilli</taxon>
        <taxon>Lactobacillales</taxon>
        <taxon>Lactobacillaceae</taxon>
        <taxon>Pediococcus</taxon>
    </lineage>
</organism>
<keyword id="KW-0066">ATP synthesis</keyword>
<keyword id="KW-1003">Cell membrane</keyword>
<keyword id="KW-0138">CF(0)</keyword>
<keyword id="KW-0375">Hydrogen ion transport</keyword>
<keyword id="KW-0406">Ion transport</keyword>
<keyword id="KW-0472">Membrane</keyword>
<keyword id="KW-0812">Transmembrane</keyword>
<keyword id="KW-1133">Transmembrane helix</keyword>
<keyword id="KW-0813">Transport</keyword>
<proteinExistence type="inferred from homology"/>
<protein>
    <recommendedName>
        <fullName evidence="1">ATP synthase subunit b</fullName>
    </recommendedName>
    <alternativeName>
        <fullName evidence="1">ATP synthase F(0) sector subunit b</fullName>
    </alternativeName>
    <alternativeName>
        <fullName evidence="1">ATPase subunit I</fullName>
    </alternativeName>
    <alternativeName>
        <fullName evidence="1">F-type ATPase subunit b</fullName>
        <shortName evidence="1">F-ATPase subunit b</shortName>
    </alternativeName>
</protein>